<dbReference type="EC" id="4.2.3.5" evidence="1"/>
<dbReference type="EMBL" id="CP000090">
    <property type="protein sequence ID" value="AAZ60628.1"/>
    <property type="molecule type" value="Genomic_DNA"/>
</dbReference>
<dbReference type="SMR" id="Q472Q5"/>
<dbReference type="STRING" id="264198.Reut_A1257"/>
<dbReference type="KEGG" id="reu:Reut_A1257"/>
<dbReference type="eggNOG" id="COG0082">
    <property type="taxonomic scope" value="Bacteria"/>
</dbReference>
<dbReference type="HOGENOM" id="CLU_034547_0_2_4"/>
<dbReference type="OrthoDB" id="9771806at2"/>
<dbReference type="UniPathway" id="UPA00053">
    <property type="reaction ID" value="UER00090"/>
</dbReference>
<dbReference type="GO" id="GO:0005829">
    <property type="term" value="C:cytosol"/>
    <property type="evidence" value="ECO:0007669"/>
    <property type="project" value="TreeGrafter"/>
</dbReference>
<dbReference type="GO" id="GO:0004107">
    <property type="term" value="F:chorismate synthase activity"/>
    <property type="evidence" value="ECO:0007669"/>
    <property type="project" value="UniProtKB-UniRule"/>
</dbReference>
<dbReference type="GO" id="GO:0010181">
    <property type="term" value="F:FMN binding"/>
    <property type="evidence" value="ECO:0007669"/>
    <property type="project" value="TreeGrafter"/>
</dbReference>
<dbReference type="GO" id="GO:0008652">
    <property type="term" value="P:amino acid biosynthetic process"/>
    <property type="evidence" value="ECO:0007669"/>
    <property type="project" value="UniProtKB-KW"/>
</dbReference>
<dbReference type="GO" id="GO:0009073">
    <property type="term" value="P:aromatic amino acid family biosynthetic process"/>
    <property type="evidence" value="ECO:0007669"/>
    <property type="project" value="UniProtKB-KW"/>
</dbReference>
<dbReference type="GO" id="GO:0009423">
    <property type="term" value="P:chorismate biosynthetic process"/>
    <property type="evidence" value="ECO:0007669"/>
    <property type="project" value="UniProtKB-UniRule"/>
</dbReference>
<dbReference type="CDD" id="cd07304">
    <property type="entry name" value="Chorismate_synthase"/>
    <property type="match status" value="1"/>
</dbReference>
<dbReference type="FunFam" id="3.60.150.10:FF:000001">
    <property type="entry name" value="Chorismate synthase"/>
    <property type="match status" value="1"/>
</dbReference>
<dbReference type="Gene3D" id="3.60.150.10">
    <property type="entry name" value="Chorismate synthase AroC"/>
    <property type="match status" value="1"/>
</dbReference>
<dbReference type="HAMAP" id="MF_00300">
    <property type="entry name" value="Chorismate_synth"/>
    <property type="match status" value="1"/>
</dbReference>
<dbReference type="InterPro" id="IPR000453">
    <property type="entry name" value="Chorismate_synth"/>
</dbReference>
<dbReference type="InterPro" id="IPR035904">
    <property type="entry name" value="Chorismate_synth_AroC_sf"/>
</dbReference>
<dbReference type="InterPro" id="IPR020541">
    <property type="entry name" value="Chorismate_synthase_CS"/>
</dbReference>
<dbReference type="NCBIfam" id="TIGR00033">
    <property type="entry name" value="aroC"/>
    <property type="match status" value="1"/>
</dbReference>
<dbReference type="NCBIfam" id="NF003793">
    <property type="entry name" value="PRK05382.1"/>
    <property type="match status" value="1"/>
</dbReference>
<dbReference type="PANTHER" id="PTHR21085">
    <property type="entry name" value="CHORISMATE SYNTHASE"/>
    <property type="match status" value="1"/>
</dbReference>
<dbReference type="PANTHER" id="PTHR21085:SF0">
    <property type="entry name" value="CHORISMATE SYNTHASE"/>
    <property type="match status" value="1"/>
</dbReference>
<dbReference type="Pfam" id="PF01264">
    <property type="entry name" value="Chorismate_synt"/>
    <property type="match status" value="1"/>
</dbReference>
<dbReference type="PIRSF" id="PIRSF001456">
    <property type="entry name" value="Chorismate_synth"/>
    <property type="match status" value="1"/>
</dbReference>
<dbReference type="SUPFAM" id="SSF103263">
    <property type="entry name" value="Chorismate synthase, AroC"/>
    <property type="match status" value="1"/>
</dbReference>
<dbReference type="PROSITE" id="PS00787">
    <property type="entry name" value="CHORISMATE_SYNTHASE_1"/>
    <property type="match status" value="1"/>
</dbReference>
<dbReference type="PROSITE" id="PS00788">
    <property type="entry name" value="CHORISMATE_SYNTHASE_2"/>
    <property type="match status" value="1"/>
</dbReference>
<dbReference type="PROSITE" id="PS00789">
    <property type="entry name" value="CHORISMATE_SYNTHASE_3"/>
    <property type="match status" value="1"/>
</dbReference>
<keyword id="KW-0028">Amino-acid biosynthesis</keyword>
<keyword id="KW-0057">Aromatic amino acid biosynthesis</keyword>
<keyword id="KW-0274">FAD</keyword>
<keyword id="KW-0285">Flavoprotein</keyword>
<keyword id="KW-0288">FMN</keyword>
<keyword id="KW-0456">Lyase</keyword>
<keyword id="KW-0521">NADP</keyword>
<comment type="function">
    <text evidence="1">Catalyzes the anti-1,4-elimination of the C-3 phosphate and the C-6 proR hydrogen from 5-enolpyruvylshikimate-3-phosphate (EPSP) to yield chorismate, which is the branch point compound that serves as the starting substrate for the three terminal pathways of aromatic amino acid biosynthesis. This reaction introduces a second double bond into the aromatic ring system.</text>
</comment>
<comment type="catalytic activity">
    <reaction evidence="1">
        <text>5-O-(1-carboxyvinyl)-3-phosphoshikimate = chorismate + phosphate</text>
        <dbReference type="Rhea" id="RHEA:21020"/>
        <dbReference type="ChEBI" id="CHEBI:29748"/>
        <dbReference type="ChEBI" id="CHEBI:43474"/>
        <dbReference type="ChEBI" id="CHEBI:57701"/>
        <dbReference type="EC" id="4.2.3.5"/>
    </reaction>
</comment>
<comment type="cofactor">
    <cofactor evidence="1">
        <name>FMNH2</name>
        <dbReference type="ChEBI" id="CHEBI:57618"/>
    </cofactor>
    <text evidence="1">Reduced FMN (FMNH(2)).</text>
</comment>
<comment type="pathway">
    <text evidence="1">Metabolic intermediate biosynthesis; chorismate biosynthesis; chorismate from D-erythrose 4-phosphate and phosphoenolpyruvate: step 7/7.</text>
</comment>
<comment type="subunit">
    <text evidence="1">Homotetramer.</text>
</comment>
<comment type="similarity">
    <text evidence="1">Belongs to the chorismate synthase family.</text>
</comment>
<protein>
    <recommendedName>
        <fullName evidence="1">Chorismate synthase</fullName>
        <shortName evidence="1">CS</shortName>
        <ecNumber evidence="1">4.2.3.5</ecNumber>
    </recommendedName>
    <alternativeName>
        <fullName evidence="1">5-enolpyruvylshikimate-3-phosphate phospholyase</fullName>
    </alternativeName>
</protein>
<gene>
    <name evidence="1" type="primary">aroC</name>
    <name type="ordered locus">Reut_A1257</name>
</gene>
<evidence type="ECO:0000255" key="1">
    <source>
        <dbReference type="HAMAP-Rule" id="MF_00300"/>
    </source>
</evidence>
<evidence type="ECO:0000256" key="2">
    <source>
        <dbReference type="SAM" id="MobiDB-lite"/>
    </source>
</evidence>
<name>AROC_CUPPJ</name>
<reference key="1">
    <citation type="journal article" date="2010" name="PLoS ONE">
        <title>The complete multipartite genome sequence of Cupriavidus necator JMP134, a versatile pollutant degrader.</title>
        <authorList>
            <person name="Lykidis A."/>
            <person name="Perez-Pantoja D."/>
            <person name="Ledger T."/>
            <person name="Mavromatis K."/>
            <person name="Anderson I.J."/>
            <person name="Ivanova N.N."/>
            <person name="Hooper S.D."/>
            <person name="Lapidus A."/>
            <person name="Lucas S."/>
            <person name="Gonzalez B."/>
            <person name="Kyrpides N.C."/>
        </authorList>
    </citation>
    <scope>NUCLEOTIDE SEQUENCE [LARGE SCALE GENOMIC DNA]</scope>
    <source>
        <strain>JMP134 / LMG 1197</strain>
    </source>
</reference>
<organism>
    <name type="scientific">Cupriavidus pinatubonensis (strain JMP 134 / LMG 1197)</name>
    <name type="common">Cupriavidus necator (strain JMP 134)</name>
    <dbReference type="NCBI Taxonomy" id="264198"/>
    <lineage>
        <taxon>Bacteria</taxon>
        <taxon>Pseudomonadati</taxon>
        <taxon>Pseudomonadota</taxon>
        <taxon>Betaproteobacteria</taxon>
        <taxon>Burkholderiales</taxon>
        <taxon>Burkholderiaceae</taxon>
        <taxon>Cupriavidus</taxon>
    </lineage>
</organism>
<proteinExistence type="inferred from homology"/>
<feature type="chain" id="PRO_0000256322" description="Chorismate synthase">
    <location>
        <begin position="1"/>
        <end position="370"/>
    </location>
</feature>
<feature type="region of interest" description="Disordered" evidence="2">
    <location>
        <begin position="41"/>
        <end position="60"/>
    </location>
</feature>
<feature type="binding site" evidence="1">
    <location>
        <position position="48"/>
    </location>
    <ligand>
        <name>NADP(+)</name>
        <dbReference type="ChEBI" id="CHEBI:58349"/>
    </ligand>
</feature>
<feature type="binding site" evidence="1">
    <location>
        <position position="54"/>
    </location>
    <ligand>
        <name>NADP(+)</name>
        <dbReference type="ChEBI" id="CHEBI:58349"/>
    </ligand>
</feature>
<feature type="binding site" evidence="1">
    <location>
        <begin position="125"/>
        <end position="127"/>
    </location>
    <ligand>
        <name>FMN</name>
        <dbReference type="ChEBI" id="CHEBI:58210"/>
    </ligand>
</feature>
<feature type="binding site" evidence="1">
    <location>
        <begin position="238"/>
        <end position="239"/>
    </location>
    <ligand>
        <name>FMN</name>
        <dbReference type="ChEBI" id="CHEBI:58210"/>
    </ligand>
</feature>
<feature type="binding site" evidence="1">
    <location>
        <position position="278"/>
    </location>
    <ligand>
        <name>FMN</name>
        <dbReference type="ChEBI" id="CHEBI:58210"/>
    </ligand>
</feature>
<feature type="binding site" evidence="1">
    <location>
        <begin position="293"/>
        <end position="297"/>
    </location>
    <ligand>
        <name>FMN</name>
        <dbReference type="ChEBI" id="CHEBI:58210"/>
    </ligand>
</feature>
<feature type="binding site" evidence="1">
    <location>
        <position position="319"/>
    </location>
    <ligand>
        <name>FMN</name>
        <dbReference type="ChEBI" id="CHEBI:58210"/>
    </ligand>
</feature>
<accession>Q472Q5</accession>
<sequence length="370" mass="39510">MSGNTLGLLFTVTTFGESHGPAIGAVVDGCPPGMDLTEADIQGDLDRRKPGTSRHVTQRKEPDQVEILSGVFEGKTTGTPICLLIRNTDQRSKDYGNIVETFRPGHADYTYWQKYGIRDYRGGGRSSARLTAPVVAAGAVAKKWLREQFGTEIRGYMSKLGEIEVPFSDWSHVPENPFFAANADIVPELETYMDALRRDGDSVGARIEVVASNVPVGLGEPLFDRLDADIAHAMMGLNAVKGVEIGAGFKSVEQRGSEHGDELTAQGFRGNNAGGILGGISTGQDITVSLAIKPTSSIRTPRESIDKAGNAATVETFGRHDPCVGIRATPIAEALLALVLVDHALRHRAQCGDVKVDTPRIPAQAPGQPG</sequence>